<gene>
    <name evidence="1" type="primary">ppa</name>
    <name type="ordered locus">MYPE4400</name>
</gene>
<keyword id="KW-0963">Cytoplasm</keyword>
<keyword id="KW-0378">Hydrolase</keyword>
<keyword id="KW-0460">Magnesium</keyword>
<keyword id="KW-0479">Metal-binding</keyword>
<keyword id="KW-1185">Reference proteome</keyword>
<protein>
    <recommendedName>
        <fullName evidence="1">Inorganic pyrophosphatase</fullName>
        <ecNumber evidence="1">3.6.1.1</ecNumber>
    </recommendedName>
    <alternativeName>
        <fullName evidence="1">Pyrophosphate phospho-hydrolase</fullName>
        <shortName evidence="1">PPase</shortName>
    </alternativeName>
</protein>
<comment type="function">
    <text evidence="1">Catalyzes the hydrolysis of inorganic pyrophosphate (PPi) forming two phosphate ions.</text>
</comment>
<comment type="catalytic activity">
    <reaction evidence="1">
        <text>diphosphate + H2O = 2 phosphate + H(+)</text>
        <dbReference type="Rhea" id="RHEA:24576"/>
        <dbReference type="ChEBI" id="CHEBI:15377"/>
        <dbReference type="ChEBI" id="CHEBI:15378"/>
        <dbReference type="ChEBI" id="CHEBI:33019"/>
        <dbReference type="ChEBI" id="CHEBI:43474"/>
        <dbReference type="EC" id="3.6.1.1"/>
    </reaction>
</comment>
<comment type="cofactor">
    <cofactor evidence="1">
        <name>Mg(2+)</name>
        <dbReference type="ChEBI" id="CHEBI:18420"/>
    </cofactor>
</comment>
<comment type="subunit">
    <text evidence="1">Homohexamer.</text>
</comment>
<comment type="subcellular location">
    <subcellularLocation>
        <location evidence="1">Cytoplasm</location>
    </subcellularLocation>
</comment>
<comment type="similarity">
    <text evidence="1">Belongs to the PPase family.</text>
</comment>
<proteinExistence type="inferred from homology"/>
<dbReference type="EC" id="3.6.1.1" evidence="1"/>
<dbReference type="EMBL" id="BA000026">
    <property type="protein sequence ID" value="BAC44230.1"/>
    <property type="molecule type" value="Genomic_DNA"/>
</dbReference>
<dbReference type="RefSeq" id="WP_011077264.1">
    <property type="nucleotide sequence ID" value="NC_004432.1"/>
</dbReference>
<dbReference type="SMR" id="Q8EVW9"/>
<dbReference type="STRING" id="272633.gene:10731556"/>
<dbReference type="KEGG" id="mpe:MYPE4400"/>
<dbReference type="eggNOG" id="COG0221">
    <property type="taxonomic scope" value="Bacteria"/>
</dbReference>
<dbReference type="HOGENOM" id="CLU_073198_1_2_14"/>
<dbReference type="InParanoid" id="Q8EVW9"/>
<dbReference type="Proteomes" id="UP000002522">
    <property type="component" value="Chromosome"/>
</dbReference>
<dbReference type="GO" id="GO:0005737">
    <property type="term" value="C:cytoplasm"/>
    <property type="evidence" value="ECO:0007669"/>
    <property type="project" value="UniProtKB-SubCell"/>
</dbReference>
<dbReference type="GO" id="GO:0004427">
    <property type="term" value="F:inorganic diphosphate phosphatase activity"/>
    <property type="evidence" value="ECO:0007669"/>
    <property type="project" value="UniProtKB-UniRule"/>
</dbReference>
<dbReference type="GO" id="GO:0000287">
    <property type="term" value="F:magnesium ion binding"/>
    <property type="evidence" value="ECO:0007669"/>
    <property type="project" value="UniProtKB-UniRule"/>
</dbReference>
<dbReference type="GO" id="GO:0006796">
    <property type="term" value="P:phosphate-containing compound metabolic process"/>
    <property type="evidence" value="ECO:0007669"/>
    <property type="project" value="InterPro"/>
</dbReference>
<dbReference type="CDD" id="cd00412">
    <property type="entry name" value="pyrophosphatase"/>
    <property type="match status" value="1"/>
</dbReference>
<dbReference type="Gene3D" id="3.90.80.10">
    <property type="entry name" value="Inorganic pyrophosphatase"/>
    <property type="match status" value="1"/>
</dbReference>
<dbReference type="HAMAP" id="MF_00209">
    <property type="entry name" value="Inorganic_PPase"/>
    <property type="match status" value="1"/>
</dbReference>
<dbReference type="InterPro" id="IPR008162">
    <property type="entry name" value="Pyrophosphatase"/>
</dbReference>
<dbReference type="InterPro" id="IPR036649">
    <property type="entry name" value="Pyrophosphatase_sf"/>
</dbReference>
<dbReference type="NCBIfam" id="NF002578">
    <property type="entry name" value="PRK02230.1"/>
    <property type="match status" value="1"/>
</dbReference>
<dbReference type="PANTHER" id="PTHR10286">
    <property type="entry name" value="INORGANIC PYROPHOSPHATASE"/>
    <property type="match status" value="1"/>
</dbReference>
<dbReference type="Pfam" id="PF00719">
    <property type="entry name" value="Pyrophosphatase"/>
    <property type="match status" value="1"/>
</dbReference>
<dbReference type="SUPFAM" id="SSF50324">
    <property type="entry name" value="Inorganic pyrophosphatase"/>
    <property type="match status" value="1"/>
</dbReference>
<dbReference type="PROSITE" id="PS00387">
    <property type="entry name" value="PPASE"/>
    <property type="match status" value="1"/>
</dbReference>
<name>IPYR_MALP2</name>
<reference key="1">
    <citation type="journal article" date="2002" name="Nucleic Acids Res.">
        <title>The complete genomic sequence of Mycoplasma penetrans, an intracellular bacterial pathogen in humans.</title>
        <authorList>
            <person name="Sasaki Y."/>
            <person name="Ishikawa J."/>
            <person name="Yamashita A."/>
            <person name="Oshima K."/>
            <person name="Kenri T."/>
            <person name="Furuya K."/>
            <person name="Yoshino C."/>
            <person name="Horino A."/>
            <person name="Shiba T."/>
            <person name="Sasaki T."/>
            <person name="Hattori M."/>
        </authorList>
    </citation>
    <scope>NUCLEOTIDE SEQUENCE [LARGE SCALE GENOMIC DNA]</scope>
    <source>
        <strain>HF-2</strain>
    </source>
</reference>
<feature type="chain" id="PRO_0000137508" description="Inorganic pyrophosphatase">
    <location>
        <begin position="1"/>
        <end position="181"/>
    </location>
</feature>
<feature type="binding site" evidence="1">
    <location>
        <position position="16"/>
    </location>
    <ligand>
        <name>substrate</name>
    </ligand>
</feature>
<feature type="binding site" evidence="1">
    <location>
        <position position="30"/>
    </location>
    <ligand>
        <name>substrate</name>
    </ligand>
</feature>
<feature type="binding site" evidence="1">
    <location>
        <position position="42"/>
    </location>
    <ligand>
        <name>substrate</name>
    </ligand>
</feature>
<feature type="binding site" evidence="1">
    <location>
        <position position="52"/>
    </location>
    <ligand>
        <name>Mg(2+)</name>
        <dbReference type="ChEBI" id="CHEBI:18420"/>
        <label>1</label>
    </ligand>
</feature>
<feature type="binding site" evidence="1">
    <location>
        <position position="57"/>
    </location>
    <ligand>
        <name>Mg(2+)</name>
        <dbReference type="ChEBI" id="CHEBI:18420"/>
        <label>1</label>
    </ligand>
</feature>
<feature type="binding site" evidence="1">
    <location>
        <position position="57"/>
    </location>
    <ligand>
        <name>Mg(2+)</name>
        <dbReference type="ChEBI" id="CHEBI:18420"/>
        <label>2</label>
    </ligand>
</feature>
<feature type="binding site" evidence="1">
    <location>
        <position position="89"/>
    </location>
    <ligand>
        <name>Mg(2+)</name>
        <dbReference type="ChEBI" id="CHEBI:18420"/>
        <label>1</label>
    </ligand>
</feature>
<feature type="binding site" evidence="1">
    <location>
        <position position="126"/>
    </location>
    <ligand>
        <name>substrate</name>
    </ligand>
</feature>
<organism>
    <name type="scientific">Malacoplasma penetrans (strain HF-2)</name>
    <name type="common">Mycoplasma penetrans</name>
    <dbReference type="NCBI Taxonomy" id="272633"/>
    <lineage>
        <taxon>Bacteria</taxon>
        <taxon>Bacillati</taxon>
        <taxon>Mycoplasmatota</taxon>
        <taxon>Mycoplasmoidales</taxon>
        <taxon>Mycoplasmoidaceae</taxon>
        <taxon>Malacoplasma</taxon>
    </lineage>
</organism>
<sequence>MKLNVTIEIPKKSNVKYEYDRKTNQISVDRILFGTEVYPHNYGFIKEALDWDGDELDALVIADQSFLPGIIVPAKIIGAMEMIDDGETDTKLISVIDCDPRYKHINNLSDLGEHTLKEIQNFFETYKLLQNKKVVIKGFKDSAWATKEYNECVELMKKYGKMDKDEFVNKMKKEHPEKYKA</sequence>
<accession>Q8EVW9</accession>
<evidence type="ECO:0000255" key="1">
    <source>
        <dbReference type="HAMAP-Rule" id="MF_00209"/>
    </source>
</evidence>